<accession>A8FEW4</accession>
<sequence>METKLFSPWTLKGVTLKNRIVMSPMCMYSSYDRDGKLQPFHFTHYISRAQGQAGLIMVEASAVSPEGRISDQDLGIWSDEHIEGFASLNEQIKAYGTKTAIQLAHAGRKAELDGDILAPSSIPFDEQSKTPVQMSVDQIKDTVQAFQDAAVRAKKAGFDIIEIHGAHGYLINEFLSPLANHRTDDYGGSPENRYRFLREVVNAVNEVWDGPLFVRVSASDYTTKGLDIADYIGIATWLKEQGVDLIDVSSGAVVQARISTFPGYQVTFAEKIKEGAGIQTGAVGLITSGVQAEEILRNQRADLIFIGREFLRDPYFPKTAAEELRTSIEGPRQYDRAW</sequence>
<evidence type="ECO:0000255" key="1">
    <source>
        <dbReference type="HAMAP-Rule" id="MF_01614"/>
    </source>
</evidence>
<gene>
    <name evidence="1" type="primary">namA</name>
    <name type="ordered locus">BPUM_2112</name>
</gene>
<organism>
    <name type="scientific">Bacillus pumilus (strain SAFR-032)</name>
    <dbReference type="NCBI Taxonomy" id="315750"/>
    <lineage>
        <taxon>Bacteria</taxon>
        <taxon>Bacillati</taxon>
        <taxon>Bacillota</taxon>
        <taxon>Bacilli</taxon>
        <taxon>Bacillales</taxon>
        <taxon>Bacillaceae</taxon>
        <taxon>Bacillus</taxon>
    </lineage>
</organism>
<keyword id="KW-0216">Detoxification</keyword>
<keyword id="KW-0285">Flavoprotein</keyword>
<keyword id="KW-0288">FMN</keyword>
<keyword id="KW-0521">NADP</keyword>
<keyword id="KW-0560">Oxidoreductase</keyword>
<protein>
    <recommendedName>
        <fullName evidence="1">NADPH dehydrogenase</fullName>
        <ecNumber evidence="1">1.6.99.1</ecNumber>
    </recommendedName>
</protein>
<dbReference type="EC" id="1.6.99.1" evidence="1"/>
<dbReference type="EMBL" id="CP000813">
    <property type="protein sequence ID" value="ABV62781.1"/>
    <property type="molecule type" value="Genomic_DNA"/>
</dbReference>
<dbReference type="SMR" id="A8FEW4"/>
<dbReference type="STRING" id="315750.BPUM_2112"/>
<dbReference type="KEGG" id="bpu:BPUM_2112"/>
<dbReference type="eggNOG" id="COG1902">
    <property type="taxonomic scope" value="Bacteria"/>
</dbReference>
<dbReference type="HOGENOM" id="CLU_012153_2_1_9"/>
<dbReference type="OrthoDB" id="9772736at2"/>
<dbReference type="Proteomes" id="UP000001355">
    <property type="component" value="Chromosome"/>
</dbReference>
<dbReference type="GO" id="GO:0010181">
    <property type="term" value="F:FMN binding"/>
    <property type="evidence" value="ECO:0007669"/>
    <property type="project" value="UniProtKB-UniRule"/>
</dbReference>
<dbReference type="GO" id="GO:0050661">
    <property type="term" value="F:NADP binding"/>
    <property type="evidence" value="ECO:0007669"/>
    <property type="project" value="UniProtKB-UniRule"/>
</dbReference>
<dbReference type="GO" id="GO:0003959">
    <property type="term" value="F:NADPH dehydrogenase activity"/>
    <property type="evidence" value="ECO:0007669"/>
    <property type="project" value="UniProtKB-UniRule"/>
</dbReference>
<dbReference type="GO" id="GO:0009636">
    <property type="term" value="P:response to toxic substance"/>
    <property type="evidence" value="ECO:0007669"/>
    <property type="project" value="UniProtKB-KW"/>
</dbReference>
<dbReference type="CDD" id="cd02932">
    <property type="entry name" value="OYE_YqiM_FMN"/>
    <property type="match status" value="1"/>
</dbReference>
<dbReference type="Gene3D" id="3.20.20.70">
    <property type="entry name" value="Aldolase class I"/>
    <property type="match status" value="1"/>
</dbReference>
<dbReference type="HAMAP" id="MF_01614">
    <property type="entry name" value="NamA"/>
    <property type="match status" value="1"/>
</dbReference>
<dbReference type="InterPro" id="IPR013785">
    <property type="entry name" value="Aldolase_TIM"/>
</dbReference>
<dbReference type="InterPro" id="IPR023663">
    <property type="entry name" value="NADPH_DH_bac"/>
</dbReference>
<dbReference type="InterPro" id="IPR001155">
    <property type="entry name" value="OxRdtase_FMN_N"/>
</dbReference>
<dbReference type="InterPro" id="IPR044152">
    <property type="entry name" value="YqjM-like"/>
</dbReference>
<dbReference type="NCBIfam" id="NF010047">
    <property type="entry name" value="PRK13523.1"/>
    <property type="match status" value="1"/>
</dbReference>
<dbReference type="PANTHER" id="PTHR43303">
    <property type="entry name" value="NADPH DEHYDROGENASE C23G7.10C-RELATED"/>
    <property type="match status" value="1"/>
</dbReference>
<dbReference type="PANTHER" id="PTHR43303:SF4">
    <property type="entry name" value="NADPH DEHYDROGENASE C23G7.10C-RELATED"/>
    <property type="match status" value="1"/>
</dbReference>
<dbReference type="Pfam" id="PF00724">
    <property type="entry name" value="Oxidored_FMN"/>
    <property type="match status" value="1"/>
</dbReference>
<dbReference type="SUPFAM" id="SSF51395">
    <property type="entry name" value="FMN-linked oxidoreductases"/>
    <property type="match status" value="1"/>
</dbReference>
<feature type="chain" id="PRO_1000069456" description="NADPH dehydrogenase">
    <location>
        <begin position="1"/>
        <end position="338"/>
    </location>
</feature>
<feature type="binding site" evidence="1">
    <location>
        <begin position="23"/>
        <end position="26"/>
    </location>
    <ligand>
        <name>FMN</name>
        <dbReference type="ChEBI" id="CHEBI:58210"/>
    </ligand>
</feature>
<feature type="binding site" evidence="1">
    <location>
        <position position="28"/>
    </location>
    <ligand>
        <name>substrate</name>
    </ligand>
</feature>
<feature type="binding site" evidence="1">
    <location>
        <position position="60"/>
    </location>
    <ligand>
        <name>FMN</name>
        <dbReference type="ChEBI" id="CHEBI:58210"/>
    </ligand>
</feature>
<feature type="binding site" evidence="1">
    <location>
        <position position="102"/>
    </location>
    <ligand>
        <name>FMN</name>
        <dbReference type="ChEBI" id="CHEBI:58210"/>
    </ligand>
</feature>
<feature type="binding site" evidence="1">
    <location>
        <begin position="164"/>
        <end position="167"/>
    </location>
    <ligand>
        <name>substrate</name>
    </ligand>
</feature>
<feature type="binding site" evidence="1">
    <location>
        <position position="215"/>
    </location>
    <ligand>
        <name>FMN</name>
        <dbReference type="ChEBI" id="CHEBI:58210"/>
    </ligand>
</feature>
<feature type="binding site" evidence="1">
    <location>
        <begin position="307"/>
        <end position="308"/>
    </location>
    <ligand>
        <name>FMN</name>
        <dbReference type="ChEBI" id="CHEBI:58210"/>
    </ligand>
</feature>
<comment type="function">
    <text evidence="1">Catalyzes the reduction of the double bond of an array of alpha,beta-unsaturated aldehydes and ketones. It also reduces the nitro group of nitroester and nitroaromatic compounds. It could have a role in detoxification processes.</text>
</comment>
<comment type="catalytic activity">
    <reaction evidence="1">
        <text>A + NADPH + H(+) = AH2 + NADP(+)</text>
        <dbReference type="Rhea" id="RHEA:13149"/>
        <dbReference type="ChEBI" id="CHEBI:13193"/>
        <dbReference type="ChEBI" id="CHEBI:15378"/>
        <dbReference type="ChEBI" id="CHEBI:17499"/>
        <dbReference type="ChEBI" id="CHEBI:57783"/>
        <dbReference type="ChEBI" id="CHEBI:58349"/>
        <dbReference type="EC" id="1.6.99.1"/>
    </reaction>
</comment>
<comment type="cofactor">
    <cofactor evidence="1">
        <name>FMN</name>
        <dbReference type="ChEBI" id="CHEBI:58210"/>
    </cofactor>
</comment>
<comment type="subunit">
    <text evidence="1">Homotetramer.</text>
</comment>
<comment type="similarity">
    <text evidence="1">Belongs to the NADH:flavin oxidoreductase/NADH oxidase family. NamA subfamily.</text>
</comment>
<proteinExistence type="inferred from homology"/>
<name>NAMA_BACP2</name>
<reference key="1">
    <citation type="journal article" date="2007" name="PLoS ONE">
        <title>Paradoxical DNA repair and peroxide resistance gene conservation in Bacillus pumilus SAFR-032.</title>
        <authorList>
            <person name="Gioia J."/>
            <person name="Yerrapragada S."/>
            <person name="Qin X."/>
            <person name="Jiang H."/>
            <person name="Igboeli O.C."/>
            <person name="Muzny D."/>
            <person name="Dugan-Rocha S."/>
            <person name="Ding Y."/>
            <person name="Hawes A."/>
            <person name="Liu W."/>
            <person name="Perez L."/>
            <person name="Kovar C."/>
            <person name="Dinh H."/>
            <person name="Lee S."/>
            <person name="Nazareth L."/>
            <person name="Blyth P."/>
            <person name="Holder M."/>
            <person name="Buhay C."/>
            <person name="Tirumalai M.R."/>
            <person name="Liu Y."/>
            <person name="Dasgupta I."/>
            <person name="Bokhetache L."/>
            <person name="Fujita M."/>
            <person name="Karouia F."/>
            <person name="Eswara Moorthy P."/>
            <person name="Siefert J."/>
            <person name="Uzman A."/>
            <person name="Buzumbo P."/>
            <person name="Verma A."/>
            <person name="Zwiya H."/>
            <person name="McWilliams B.D."/>
            <person name="Olowu A."/>
            <person name="Clinkenbeard K.D."/>
            <person name="Newcombe D."/>
            <person name="Golebiewski L."/>
            <person name="Petrosino J.F."/>
            <person name="Nicholson W.L."/>
            <person name="Fox G.E."/>
            <person name="Venkateswaran K."/>
            <person name="Highlander S.K."/>
            <person name="Weinstock G.M."/>
        </authorList>
    </citation>
    <scope>NUCLEOTIDE SEQUENCE [LARGE SCALE GENOMIC DNA]</scope>
    <source>
        <strain>SAFR-032</strain>
    </source>
</reference>